<protein>
    <recommendedName>
        <fullName>Probable cinnamyl alcohol dehydrogenase</fullName>
        <shortName>CAD</shortName>
        <ecNumber evidence="1">1.1.1.195</ecNumber>
    </recommendedName>
</protein>
<dbReference type="EC" id="1.1.1.195" evidence="1"/>
<dbReference type="EMBL" id="U62394">
    <property type="protein sequence ID" value="AAB38774.1"/>
    <property type="molecule type" value="mRNA"/>
</dbReference>
<dbReference type="EMBL" id="AF060491">
    <property type="protein sequence ID" value="AAC31166.1"/>
    <property type="molecule type" value="Genomic_DNA"/>
</dbReference>
<dbReference type="SMR" id="Q40976"/>
<dbReference type="UniPathway" id="UPA00711"/>
<dbReference type="GO" id="GO:0045551">
    <property type="term" value="F:cinnamyl-alcohol dehydrogenase activity"/>
    <property type="evidence" value="ECO:0007669"/>
    <property type="project" value="UniProtKB-EC"/>
</dbReference>
<dbReference type="GO" id="GO:0050268">
    <property type="term" value="F:coniferyl-alcohol dehydrogenase activity"/>
    <property type="evidence" value="ECO:0007669"/>
    <property type="project" value="RHEA"/>
</dbReference>
<dbReference type="GO" id="GO:0008270">
    <property type="term" value="F:zinc ion binding"/>
    <property type="evidence" value="ECO:0007669"/>
    <property type="project" value="InterPro"/>
</dbReference>
<dbReference type="GO" id="GO:0009809">
    <property type="term" value="P:lignin biosynthetic process"/>
    <property type="evidence" value="ECO:0007669"/>
    <property type="project" value="UniProtKB-KW"/>
</dbReference>
<dbReference type="CDD" id="cd05283">
    <property type="entry name" value="CAD1"/>
    <property type="match status" value="1"/>
</dbReference>
<dbReference type="FunFam" id="3.40.50.720:FF:000022">
    <property type="entry name" value="Cinnamyl alcohol dehydrogenase"/>
    <property type="match status" value="1"/>
</dbReference>
<dbReference type="FunFam" id="3.90.180.10:FF:000004">
    <property type="entry name" value="probable cinnamyl alcohol dehydrogenase"/>
    <property type="match status" value="1"/>
</dbReference>
<dbReference type="FunFam" id="3.90.180.10:FF:000100">
    <property type="entry name" value="Putative cinnamyl alcohol dehydrogenase 6"/>
    <property type="match status" value="1"/>
</dbReference>
<dbReference type="Gene3D" id="3.90.180.10">
    <property type="entry name" value="Medium-chain alcohol dehydrogenases, catalytic domain"/>
    <property type="match status" value="1"/>
</dbReference>
<dbReference type="Gene3D" id="3.40.50.720">
    <property type="entry name" value="NAD(P)-binding Rossmann-like Domain"/>
    <property type="match status" value="1"/>
</dbReference>
<dbReference type="InterPro" id="IPR013149">
    <property type="entry name" value="ADH-like_C"/>
</dbReference>
<dbReference type="InterPro" id="IPR013154">
    <property type="entry name" value="ADH-like_N"/>
</dbReference>
<dbReference type="InterPro" id="IPR002328">
    <property type="entry name" value="ADH_Zn_CS"/>
</dbReference>
<dbReference type="InterPro" id="IPR047109">
    <property type="entry name" value="CAD-like"/>
</dbReference>
<dbReference type="InterPro" id="IPR011032">
    <property type="entry name" value="GroES-like_sf"/>
</dbReference>
<dbReference type="InterPro" id="IPR036291">
    <property type="entry name" value="NAD(P)-bd_dom_sf"/>
</dbReference>
<dbReference type="InterPro" id="IPR020843">
    <property type="entry name" value="PKS_ER"/>
</dbReference>
<dbReference type="PANTHER" id="PTHR42683">
    <property type="entry name" value="ALDEHYDE REDUCTASE"/>
    <property type="match status" value="1"/>
</dbReference>
<dbReference type="Pfam" id="PF08240">
    <property type="entry name" value="ADH_N"/>
    <property type="match status" value="1"/>
</dbReference>
<dbReference type="Pfam" id="PF00107">
    <property type="entry name" value="ADH_zinc_N"/>
    <property type="match status" value="1"/>
</dbReference>
<dbReference type="SMART" id="SM00829">
    <property type="entry name" value="PKS_ER"/>
    <property type="match status" value="1"/>
</dbReference>
<dbReference type="SUPFAM" id="SSF50129">
    <property type="entry name" value="GroES-like"/>
    <property type="match status" value="1"/>
</dbReference>
<dbReference type="SUPFAM" id="SSF51735">
    <property type="entry name" value="NAD(P)-binding Rossmann-fold domains"/>
    <property type="match status" value="1"/>
</dbReference>
<dbReference type="PROSITE" id="PS00059">
    <property type="entry name" value="ADH_ZINC"/>
    <property type="match status" value="1"/>
</dbReference>
<organism>
    <name type="scientific">Pinus radiata</name>
    <name type="common">Monterey pine</name>
    <name type="synonym">Pinus insignis</name>
    <dbReference type="NCBI Taxonomy" id="3347"/>
    <lineage>
        <taxon>Eukaryota</taxon>
        <taxon>Viridiplantae</taxon>
        <taxon>Streptophyta</taxon>
        <taxon>Embryophyta</taxon>
        <taxon>Tracheophyta</taxon>
        <taxon>Spermatophyta</taxon>
        <taxon>Pinopsida</taxon>
        <taxon>Pinidae</taxon>
        <taxon>Conifers I</taxon>
        <taxon>Pinales</taxon>
        <taxon>Pinaceae</taxon>
        <taxon>Pinus</taxon>
        <taxon>Pinus subgen. Pinus</taxon>
    </lineage>
</organism>
<comment type="function">
    <text evidence="1">Involved in lignin biosynthesis. Catalyzes the final step specific for the production of lignin monomers. Catalyzes the NADPH-dependent reduction of coniferaldehyde, 5-hydroxyconiferaldehyde, sinapaldehyde, 4-coumaraldehyde and caffeyl aldehyde to their respective alcohols.</text>
</comment>
<comment type="catalytic activity">
    <reaction evidence="1">
        <text>(E)-cinnamyl alcohol + NADP(+) = (E)-cinnamaldehyde + NADPH + H(+)</text>
        <dbReference type="Rhea" id="RHEA:10392"/>
        <dbReference type="ChEBI" id="CHEBI:15378"/>
        <dbReference type="ChEBI" id="CHEBI:16731"/>
        <dbReference type="ChEBI" id="CHEBI:33227"/>
        <dbReference type="ChEBI" id="CHEBI:57783"/>
        <dbReference type="ChEBI" id="CHEBI:58349"/>
        <dbReference type="EC" id="1.1.1.195"/>
    </reaction>
    <physiologicalReaction direction="right-to-left" evidence="1">
        <dbReference type="Rhea" id="RHEA:10394"/>
    </physiologicalReaction>
</comment>
<comment type="catalytic activity">
    <reaction evidence="1">
        <text>(E)-coniferol + NADP(+) = (E)-coniferaldehyde + NADPH + H(+)</text>
        <dbReference type="Rhea" id="RHEA:22444"/>
        <dbReference type="ChEBI" id="CHEBI:15378"/>
        <dbReference type="ChEBI" id="CHEBI:16547"/>
        <dbReference type="ChEBI" id="CHEBI:17745"/>
        <dbReference type="ChEBI" id="CHEBI:57783"/>
        <dbReference type="ChEBI" id="CHEBI:58349"/>
        <dbReference type="EC" id="1.1.1.195"/>
    </reaction>
    <physiologicalReaction direction="right-to-left" evidence="1">
        <dbReference type="Rhea" id="RHEA:22446"/>
    </physiologicalReaction>
</comment>
<comment type="catalytic activity">
    <reaction evidence="1">
        <text>(E)-sinapyl alcohol + NADP(+) = (E)-sinapaldehyde + NADPH + H(+)</text>
        <dbReference type="Rhea" id="RHEA:45704"/>
        <dbReference type="ChEBI" id="CHEBI:15378"/>
        <dbReference type="ChEBI" id="CHEBI:27949"/>
        <dbReference type="ChEBI" id="CHEBI:57783"/>
        <dbReference type="ChEBI" id="CHEBI:58349"/>
        <dbReference type="ChEBI" id="CHEBI:64557"/>
        <dbReference type="EC" id="1.1.1.195"/>
    </reaction>
    <physiologicalReaction direction="right-to-left" evidence="1">
        <dbReference type="Rhea" id="RHEA:45706"/>
    </physiologicalReaction>
</comment>
<comment type="catalytic activity">
    <reaction evidence="1">
        <text>(E)-4-coumaroyl alcohol + NADP(+) = (E)-4-coumaraldehyde + NADPH + H(+)</text>
        <dbReference type="Rhea" id="RHEA:45724"/>
        <dbReference type="ChEBI" id="CHEBI:15378"/>
        <dbReference type="ChEBI" id="CHEBI:28353"/>
        <dbReference type="ChEBI" id="CHEBI:57783"/>
        <dbReference type="ChEBI" id="CHEBI:58349"/>
        <dbReference type="ChEBI" id="CHEBI:64555"/>
        <dbReference type="EC" id="1.1.1.195"/>
    </reaction>
    <physiologicalReaction direction="right-to-left" evidence="1">
        <dbReference type="Rhea" id="RHEA:45726"/>
    </physiologicalReaction>
</comment>
<comment type="catalytic activity">
    <reaction evidence="1">
        <text>(E)-caffeyl alcohol + NADP(+) = (E)-caffeyl aldehyde + NADPH + H(+)</text>
        <dbReference type="Rhea" id="RHEA:45728"/>
        <dbReference type="ChEBI" id="CHEBI:15378"/>
        <dbReference type="ChEBI" id="CHEBI:28323"/>
        <dbReference type="ChEBI" id="CHEBI:31334"/>
        <dbReference type="ChEBI" id="CHEBI:57783"/>
        <dbReference type="ChEBI" id="CHEBI:58349"/>
    </reaction>
    <physiologicalReaction direction="right-to-left" evidence="1">
        <dbReference type="Rhea" id="RHEA:45730"/>
    </physiologicalReaction>
</comment>
<comment type="cofactor">
    <cofactor evidence="1">
        <name>Zn(2+)</name>
        <dbReference type="ChEBI" id="CHEBI:29105"/>
    </cofactor>
    <text evidence="1">Binds 2 Zn(2+) ions per subunit.</text>
</comment>
<comment type="pathway">
    <text evidence="1">Aromatic compound metabolism; phenylpropanoid biosynthesis.</text>
</comment>
<comment type="subunit">
    <text evidence="1">Homodimer.</text>
</comment>
<comment type="similarity">
    <text evidence="2">Belongs to the zinc-containing alcohol dehydrogenase family.</text>
</comment>
<gene>
    <name type="primary">CAD</name>
</gene>
<reference key="1">
    <citation type="online journal article" date="1996" name="Plant Gene Register">
        <title>A cDNA encoding a cinnamyl alcohol dehydrogenase from Pinus radiata.</title>
        <authorList>
            <person name="Wagner A."/>
            <person name="Walden A."/>
            <person name="Walter C."/>
        </authorList>
        <locator>PGR96-097</locator>
    </citation>
    <scope>NUCLEOTIDE SEQUENCE [MRNA]</scope>
    <source>
        <tissue>Male cone</tissue>
    </source>
</reference>
<reference key="2">
    <citation type="online journal article" date="1998" name="Plant Gene Register">
        <title>Nucleotide sequence of a cinnamyl alcohol dehydrogenase (CAD) gene from Pinus radiata.</title>
        <authorList>
            <person name="Moyle R."/>
            <person name="Wagner A."/>
            <person name="Walter C."/>
        </authorList>
        <locator>PGR98-118</locator>
    </citation>
    <scope>NUCLEOTIDE SEQUENCE [GENOMIC DNA]</scope>
</reference>
<keyword id="KW-0438">Lignin biosynthesis</keyword>
<keyword id="KW-0479">Metal-binding</keyword>
<keyword id="KW-0521">NADP</keyword>
<keyword id="KW-0560">Oxidoreductase</keyword>
<keyword id="KW-0862">Zinc</keyword>
<sequence>MGSLETEKTVTGYAARDSSGHLSPYTYNLRKKGPEDVIVKVIYCGICHSDLVQMRNEMGMSHYPMVPGHEVVGIVTEIGSEVKKFKVGEHVGVGCIVGSCRSCGNCNQSMEQYCSKRIWTYNDVNHDGTPTQGGFASSMVVDQMFVVRIPENLPLEQAAPLLCAGVTVFSPMKHFAMTEPGKKCGILGLGGVGHMGVKIAKAFGLHVTVISSSDKKKEEAMEVLGADAYLVSKDTEKMMEAAESLDYIMDTIPVAHPLEPYLALLKTNGKLVMLGVVPEPLHFVTPLLILGRRSIAGSFIGSMEETQETLDFCAEKKVSSMIEVVGLDYINTAMERLEKNDVRYRFVVDVAGSKLDN</sequence>
<accession>Q40976</accession>
<accession>O81222</accession>
<feature type="chain" id="PRO_0000160801" description="Probable cinnamyl alcohol dehydrogenase">
    <location>
        <begin position="1"/>
        <end position="357"/>
    </location>
</feature>
<feature type="binding site" evidence="1">
    <location>
        <position position="47"/>
    </location>
    <ligand>
        <name>Zn(2+)</name>
        <dbReference type="ChEBI" id="CHEBI:29105"/>
        <label>1</label>
        <note>catalytic</note>
    </ligand>
</feature>
<feature type="binding site" evidence="1">
    <location>
        <position position="49"/>
    </location>
    <ligand>
        <name>NADP(+)</name>
        <dbReference type="ChEBI" id="CHEBI:58349"/>
    </ligand>
</feature>
<feature type="binding site" evidence="1">
    <location>
        <position position="69"/>
    </location>
    <ligand>
        <name>Zn(2+)</name>
        <dbReference type="ChEBI" id="CHEBI:29105"/>
        <label>1</label>
        <note>catalytic</note>
    </ligand>
</feature>
<feature type="binding site" evidence="1">
    <location>
        <position position="70"/>
    </location>
    <ligand>
        <name>Zn(2+)</name>
        <dbReference type="ChEBI" id="CHEBI:29105"/>
        <label>1</label>
        <note>catalytic</note>
    </ligand>
</feature>
<feature type="binding site" evidence="1">
    <location>
        <position position="100"/>
    </location>
    <ligand>
        <name>Zn(2+)</name>
        <dbReference type="ChEBI" id="CHEBI:29105"/>
        <label>2</label>
    </ligand>
</feature>
<feature type="binding site" evidence="1">
    <location>
        <position position="103"/>
    </location>
    <ligand>
        <name>Zn(2+)</name>
        <dbReference type="ChEBI" id="CHEBI:29105"/>
        <label>2</label>
    </ligand>
</feature>
<feature type="binding site" evidence="1">
    <location>
        <position position="106"/>
    </location>
    <ligand>
        <name>Zn(2+)</name>
        <dbReference type="ChEBI" id="CHEBI:29105"/>
        <label>2</label>
    </ligand>
</feature>
<feature type="binding site" evidence="1">
    <location>
        <position position="114"/>
    </location>
    <ligand>
        <name>Zn(2+)</name>
        <dbReference type="ChEBI" id="CHEBI:29105"/>
        <label>2</label>
    </ligand>
</feature>
<feature type="binding site" evidence="1">
    <location>
        <position position="163"/>
    </location>
    <ligand>
        <name>Zn(2+)</name>
        <dbReference type="ChEBI" id="CHEBI:29105"/>
        <label>1</label>
        <note>catalytic</note>
    </ligand>
</feature>
<feature type="binding site" evidence="1">
    <location>
        <position position="167"/>
    </location>
    <ligand>
        <name>NADP(+)</name>
        <dbReference type="ChEBI" id="CHEBI:58349"/>
    </ligand>
</feature>
<feature type="binding site" evidence="1">
    <location>
        <begin position="188"/>
        <end position="193"/>
    </location>
    <ligand>
        <name>NADP(+)</name>
        <dbReference type="ChEBI" id="CHEBI:58349"/>
    </ligand>
</feature>
<feature type="binding site" evidence="1">
    <location>
        <begin position="211"/>
        <end position="216"/>
    </location>
    <ligand>
        <name>NADP(+)</name>
        <dbReference type="ChEBI" id="CHEBI:58349"/>
    </ligand>
</feature>
<feature type="binding site" evidence="1">
    <location>
        <position position="251"/>
    </location>
    <ligand>
        <name>NADP(+)</name>
        <dbReference type="ChEBI" id="CHEBI:58349"/>
    </ligand>
</feature>
<feature type="binding site" evidence="1">
    <location>
        <position position="275"/>
    </location>
    <ligand>
        <name>NADP(+)</name>
        <dbReference type="ChEBI" id="CHEBI:58349"/>
    </ligand>
</feature>
<feature type="binding site" evidence="1">
    <location>
        <begin position="298"/>
        <end position="300"/>
    </location>
    <ligand>
        <name>NADP(+)</name>
        <dbReference type="ChEBI" id="CHEBI:58349"/>
    </ligand>
</feature>
<feature type="sequence conflict" description="In Ref. 2; AAC31166." evidence="2" ref="2">
    <original>E</original>
    <variation>G</variation>
    <location>
        <position position="179"/>
    </location>
</feature>
<evidence type="ECO:0000250" key="1">
    <source>
        <dbReference type="UniProtKB" id="O49482"/>
    </source>
</evidence>
<evidence type="ECO:0000305" key="2"/>
<proteinExistence type="evidence at transcript level"/>
<name>CADH_PINRA</name>